<evidence type="ECO:0000256" key="1">
    <source>
        <dbReference type="SAM" id="MobiDB-lite"/>
    </source>
</evidence>
<evidence type="ECO:0000269" key="2">
    <source>
    </source>
</evidence>
<evidence type="ECO:0000269" key="3">
    <source>
    </source>
</evidence>
<evidence type="ECO:0000269" key="4">
    <source>
    </source>
</evidence>
<evidence type="ECO:0000269" key="5">
    <source>
    </source>
</evidence>
<evidence type="ECO:0000305" key="6"/>
<evidence type="ECO:0007744" key="7">
    <source>
    </source>
</evidence>
<keyword id="KW-0539">Nucleus</keyword>
<keyword id="KW-0597">Phosphoprotein</keyword>
<keyword id="KW-1185">Reference proteome</keyword>
<dbReference type="EMBL" id="X78214">
    <property type="protein sequence ID" value="CAA55049.1"/>
    <property type="molecule type" value="Genomic_DNA"/>
</dbReference>
<dbReference type="EMBL" id="Z35807">
    <property type="protein sequence ID" value="CAA84866.1"/>
    <property type="molecule type" value="Genomic_DNA"/>
</dbReference>
<dbReference type="EMBL" id="AY692578">
    <property type="protein sequence ID" value="AAT92597.1"/>
    <property type="molecule type" value="Genomic_DNA"/>
</dbReference>
<dbReference type="EMBL" id="BK006936">
    <property type="protein sequence ID" value="DAA07072.1"/>
    <property type="molecule type" value="Genomic_DNA"/>
</dbReference>
<dbReference type="PIR" id="S42499">
    <property type="entry name" value="S42499"/>
</dbReference>
<dbReference type="RefSeq" id="NP_009507.1">
    <property type="nucleotide sequence ID" value="NM_001178286.1"/>
</dbReference>
<dbReference type="BioGRID" id="32651">
    <property type="interactions" value="74"/>
</dbReference>
<dbReference type="ComplexPortal" id="CPX-1846">
    <property type="entry name" value="Histone H2A phosphatase complex"/>
</dbReference>
<dbReference type="DIP" id="DIP-4295N"/>
<dbReference type="FunCoup" id="P38193">
    <property type="interactions" value="81"/>
</dbReference>
<dbReference type="IntAct" id="P38193">
    <property type="interactions" value="10"/>
</dbReference>
<dbReference type="MINT" id="P38193"/>
<dbReference type="STRING" id="4932.YBL046W"/>
<dbReference type="iPTMnet" id="P38193"/>
<dbReference type="PaxDb" id="4932-YBL046W"/>
<dbReference type="PeptideAtlas" id="P38193"/>
<dbReference type="EnsemblFungi" id="YBL046W_mRNA">
    <property type="protein sequence ID" value="YBL046W"/>
    <property type="gene ID" value="YBL046W"/>
</dbReference>
<dbReference type="GeneID" id="852234"/>
<dbReference type="KEGG" id="sce:YBL046W"/>
<dbReference type="AGR" id="SGD:S000000142"/>
<dbReference type="SGD" id="S000000142">
    <property type="gene designation" value="PSY4"/>
</dbReference>
<dbReference type="VEuPathDB" id="FungiDB:YBL046W"/>
<dbReference type="eggNOG" id="ENOG502S2WZ">
    <property type="taxonomic scope" value="Eukaryota"/>
</dbReference>
<dbReference type="HOGENOM" id="CLU_036743_1_0_1"/>
<dbReference type="InParanoid" id="P38193"/>
<dbReference type="OMA" id="CYDPFKY"/>
<dbReference type="OrthoDB" id="341898at2759"/>
<dbReference type="BioCyc" id="YEAST:G3O-28946-MONOMER"/>
<dbReference type="BioGRID-ORCS" id="852234">
    <property type="hits" value="0 hits in 10 CRISPR screens"/>
</dbReference>
<dbReference type="PRO" id="PR:P38193"/>
<dbReference type="Proteomes" id="UP000002311">
    <property type="component" value="Chromosome II"/>
</dbReference>
<dbReference type="RNAct" id="P38193">
    <property type="molecule type" value="protein"/>
</dbReference>
<dbReference type="GO" id="GO:0005737">
    <property type="term" value="C:cytoplasm"/>
    <property type="evidence" value="ECO:0000314"/>
    <property type="project" value="SGD"/>
</dbReference>
<dbReference type="GO" id="GO:0005634">
    <property type="term" value="C:nucleus"/>
    <property type="evidence" value="ECO:0000314"/>
    <property type="project" value="SGD"/>
</dbReference>
<dbReference type="GO" id="GO:0030289">
    <property type="term" value="C:protein phosphatase 4 complex"/>
    <property type="evidence" value="ECO:0000314"/>
    <property type="project" value="SGD"/>
</dbReference>
<dbReference type="GO" id="GO:0019888">
    <property type="term" value="F:protein phosphatase regulator activity"/>
    <property type="evidence" value="ECO:0000315"/>
    <property type="project" value="SGD"/>
</dbReference>
<dbReference type="GO" id="GO:0051598">
    <property type="term" value="P:meiotic recombination checkpoint signaling"/>
    <property type="evidence" value="ECO:0000303"/>
    <property type="project" value="ComplexPortal"/>
</dbReference>
<dbReference type="GO" id="GO:2000002">
    <property type="term" value="P:negative regulation of DNA damage checkpoint"/>
    <property type="evidence" value="ECO:0000315"/>
    <property type="project" value="SGD"/>
</dbReference>
<dbReference type="InterPro" id="IPR015267">
    <property type="entry name" value="PPP4R2"/>
</dbReference>
<dbReference type="PANTHER" id="PTHR16487">
    <property type="entry name" value="PPP4R2-RELATED PROTEIN"/>
    <property type="match status" value="1"/>
</dbReference>
<dbReference type="PANTHER" id="PTHR16487:SF0">
    <property type="entry name" value="PROTEIN PHOSPHATASE 4 REGULATORY SUBUNIT 2-RELATED"/>
    <property type="match status" value="1"/>
</dbReference>
<dbReference type="Pfam" id="PF09184">
    <property type="entry name" value="PPP4R2"/>
    <property type="match status" value="1"/>
</dbReference>
<accession>P38193</accession>
<accession>D6VPV2</accession>
<accession>Q6B302</accession>
<comment type="function">
    <text evidence="5">Regulatory subunit of the histone H2A phosphatase complex, which dephosphorylates H2AS128ph (gamma-H2A) that has been displaced from sites of DNA lesions in the double-stranded DNA break repair process. Dephosphorylation is necessary for efficient recovery from the DNA damage checkpoint.</text>
</comment>
<comment type="subunit">
    <text evidence="4 5">Regulatory subunit (R2) of the histone H2A phosphatase complex (HTP-C) consisting of PPH3, PSY2 and PSY4. Interacts with SPT4 and SPT5.</text>
</comment>
<comment type="interaction">
    <interactant intactId="EBI-21239">
        <id>P38193</id>
    </interactant>
    <interactant intactId="EBI-12759">
        <id>P32345</id>
        <label>PPH3</label>
    </interactant>
    <organismsDiffer>false</organismsDiffer>
    <experiments>11</experiments>
</comment>
<comment type="interaction">
    <interactant intactId="EBI-21239">
        <id>P38193</id>
    </interactant>
    <interactant intactId="EBI-29107">
        <id>P40164</id>
        <label>PSY2</label>
    </interactant>
    <organismsDiffer>false</organismsDiffer>
    <experiments>10</experiments>
</comment>
<comment type="subcellular location">
    <subcellularLocation>
        <location evidence="2">Nucleus</location>
    </subcellularLocation>
</comment>
<comment type="miscellaneous">
    <text evidence="3">Present with 1010 molecules/cell in log phase SD medium.</text>
</comment>
<comment type="similarity">
    <text evidence="6">Belongs to the PPP4R2 family.</text>
</comment>
<sequence length="441" mass="50655">MSSTMLDDVDNNMMGIKSISLYELLSDVVKQGDKTRLVTAGPEQVLPDLIRHITETIPFDLFINLKNEMNDARNLVTRLNWLGKFLNDNFLQNHTFPFTILRICELCYDPFKYYKINELEKFVNALEKCCMVTSSWQVFDKTHGEKQEDDKEKDINFIKNQEDVSLMKIPWMTENNTRELAPFIREIDSIMSVNLGYDDEDEEEGFFDGDEDREMGNKSKRNVLLKDENFMVEEYYEDDCGINDDNSDNKGQNCQSDVTKNNSDDEDDDDNDDDYREDGADEDDEDDDHMGSTDDDEDDDEDRQAGESTKVQNFDKKNETPRKRKPTDLDNFEYDESPSFTNMDLTTPKKYKHTATGRFSIIESPSSSLLNAMDGSNEISSSQEEEKEDAHENHEGRSEGLLPGDELVSPSMSSSQEDKMVAIAGITYRENISSPLGKKSR</sequence>
<protein>
    <recommendedName>
        <fullName>Serine/threonine-protein phosphatase 4 regulatory subunit 2</fullName>
        <shortName>PP4R2</shortName>
    </recommendedName>
</protein>
<organism>
    <name type="scientific">Saccharomyces cerevisiae (strain ATCC 204508 / S288c)</name>
    <name type="common">Baker's yeast</name>
    <dbReference type="NCBI Taxonomy" id="559292"/>
    <lineage>
        <taxon>Eukaryota</taxon>
        <taxon>Fungi</taxon>
        <taxon>Dikarya</taxon>
        <taxon>Ascomycota</taxon>
        <taxon>Saccharomycotina</taxon>
        <taxon>Saccharomycetes</taxon>
        <taxon>Saccharomycetales</taxon>
        <taxon>Saccharomycetaceae</taxon>
        <taxon>Saccharomyces</taxon>
    </lineage>
</organism>
<name>PP4R2_YEAST</name>
<feature type="chain" id="PRO_0000202458" description="Serine/threonine-protein phosphatase 4 regulatory subunit 2">
    <location>
        <begin position="1"/>
        <end position="441"/>
    </location>
</feature>
<feature type="region of interest" description="Disordered" evidence="1">
    <location>
        <begin position="201"/>
        <end position="220"/>
    </location>
</feature>
<feature type="region of interest" description="Disordered" evidence="1">
    <location>
        <begin position="242"/>
        <end position="348"/>
    </location>
</feature>
<feature type="region of interest" description="Disordered" evidence="1">
    <location>
        <begin position="364"/>
        <end position="418"/>
    </location>
</feature>
<feature type="compositionally biased region" description="Acidic residues" evidence="1">
    <location>
        <begin position="201"/>
        <end position="213"/>
    </location>
</feature>
<feature type="compositionally biased region" description="Polar residues" evidence="1">
    <location>
        <begin position="249"/>
        <end position="261"/>
    </location>
</feature>
<feature type="compositionally biased region" description="Acidic residues" evidence="1">
    <location>
        <begin position="264"/>
        <end position="302"/>
    </location>
</feature>
<feature type="compositionally biased region" description="Basic and acidic residues" evidence="1">
    <location>
        <begin position="388"/>
        <end position="398"/>
    </location>
</feature>
<feature type="modified residue" description="Phosphothreonine" evidence="7">
    <location>
        <position position="347"/>
    </location>
</feature>
<feature type="sequence conflict" description="In Ref. 4; AAT92597." evidence="6" ref="4">
    <original>D</original>
    <variation>V</variation>
    <location>
        <position position="374"/>
    </location>
</feature>
<reference key="1">
    <citation type="journal article" date="1994" name="Yeast">
        <title>The sequence of a 22.4 kb DNA fragment from the left arm of yeast chromosome II reveals homologues to bacterial proline synthetase and murine alpha-adaptin, as well as a new permease and a DNA-binding protein.</title>
        <authorList>
            <person name="de Wergifosse P."/>
            <person name="Jacques B."/>
            <person name="Jonniaux J.-L."/>
            <person name="Purnelle B."/>
            <person name="Skala J."/>
            <person name="Goffeau A."/>
        </authorList>
    </citation>
    <scope>NUCLEOTIDE SEQUENCE [GENOMIC DNA]</scope>
    <source>
        <strain>ATCC 204508 / S288c</strain>
    </source>
</reference>
<reference key="2">
    <citation type="journal article" date="1994" name="EMBO J.">
        <title>Complete DNA sequence of yeast chromosome II.</title>
        <authorList>
            <person name="Feldmann H."/>
            <person name="Aigle M."/>
            <person name="Aljinovic G."/>
            <person name="Andre B."/>
            <person name="Baclet M.C."/>
            <person name="Barthe C."/>
            <person name="Baur A."/>
            <person name="Becam A.-M."/>
            <person name="Biteau N."/>
            <person name="Boles E."/>
            <person name="Brandt T."/>
            <person name="Brendel M."/>
            <person name="Brueckner M."/>
            <person name="Bussereau F."/>
            <person name="Christiansen C."/>
            <person name="Contreras R."/>
            <person name="Crouzet M."/>
            <person name="Cziepluch C."/>
            <person name="Demolis N."/>
            <person name="Delaveau T."/>
            <person name="Doignon F."/>
            <person name="Domdey H."/>
            <person name="Duesterhus S."/>
            <person name="Dubois E."/>
            <person name="Dujon B."/>
            <person name="El Bakkoury M."/>
            <person name="Entian K.-D."/>
            <person name="Feuermann M."/>
            <person name="Fiers W."/>
            <person name="Fobo G.M."/>
            <person name="Fritz C."/>
            <person name="Gassenhuber J."/>
            <person name="Glansdorff N."/>
            <person name="Goffeau A."/>
            <person name="Grivell L.A."/>
            <person name="de Haan M."/>
            <person name="Hein C."/>
            <person name="Herbert C.J."/>
            <person name="Hollenberg C.P."/>
            <person name="Holmstroem K."/>
            <person name="Jacq C."/>
            <person name="Jacquet M."/>
            <person name="Jauniaux J.-C."/>
            <person name="Jonniaux J.-L."/>
            <person name="Kallesoee T."/>
            <person name="Kiesau P."/>
            <person name="Kirchrath L."/>
            <person name="Koetter P."/>
            <person name="Korol S."/>
            <person name="Liebl S."/>
            <person name="Logghe M."/>
            <person name="Lohan A.J.E."/>
            <person name="Louis E.J."/>
            <person name="Li Z.Y."/>
            <person name="Maat M.J."/>
            <person name="Mallet L."/>
            <person name="Mannhaupt G."/>
            <person name="Messenguy F."/>
            <person name="Miosga T."/>
            <person name="Molemans F."/>
            <person name="Mueller S."/>
            <person name="Nasr F."/>
            <person name="Obermaier B."/>
            <person name="Perea J."/>
            <person name="Pierard A."/>
            <person name="Piravandi E."/>
            <person name="Pohl F.M."/>
            <person name="Pohl T.M."/>
            <person name="Potier S."/>
            <person name="Proft M."/>
            <person name="Purnelle B."/>
            <person name="Ramezani Rad M."/>
            <person name="Rieger M."/>
            <person name="Rose M."/>
            <person name="Schaaff-Gerstenschlaeger I."/>
            <person name="Scherens B."/>
            <person name="Schwarzlose C."/>
            <person name="Skala J."/>
            <person name="Slonimski P.P."/>
            <person name="Smits P.H.M."/>
            <person name="Souciet J.-L."/>
            <person name="Steensma H.Y."/>
            <person name="Stucka R."/>
            <person name="Urrestarazu L.A."/>
            <person name="van der Aart Q.J.M."/>
            <person name="Van Dyck L."/>
            <person name="Vassarotti A."/>
            <person name="Vetter I."/>
            <person name="Vierendeels F."/>
            <person name="Vissers S."/>
            <person name="Wagner G."/>
            <person name="de Wergifosse P."/>
            <person name="Wolfe K.H."/>
            <person name="Zagulski M."/>
            <person name="Zimmermann F.K."/>
            <person name="Mewes H.-W."/>
            <person name="Kleine K."/>
        </authorList>
    </citation>
    <scope>NUCLEOTIDE SEQUENCE [LARGE SCALE GENOMIC DNA]</scope>
    <source>
        <strain>ATCC 204508 / S288c</strain>
    </source>
</reference>
<reference key="3">
    <citation type="journal article" date="2014" name="G3 (Bethesda)">
        <title>The reference genome sequence of Saccharomyces cerevisiae: Then and now.</title>
        <authorList>
            <person name="Engel S.R."/>
            <person name="Dietrich F.S."/>
            <person name="Fisk D.G."/>
            <person name="Binkley G."/>
            <person name="Balakrishnan R."/>
            <person name="Costanzo M.C."/>
            <person name="Dwight S.S."/>
            <person name="Hitz B.C."/>
            <person name="Karra K."/>
            <person name="Nash R.S."/>
            <person name="Weng S."/>
            <person name="Wong E.D."/>
            <person name="Lloyd P."/>
            <person name="Skrzypek M.S."/>
            <person name="Miyasato S.R."/>
            <person name="Simison M."/>
            <person name="Cherry J.M."/>
        </authorList>
    </citation>
    <scope>GENOME REANNOTATION</scope>
    <source>
        <strain>ATCC 204508 / S288c</strain>
    </source>
</reference>
<reference key="4">
    <citation type="journal article" date="2007" name="Genome Res.">
        <title>Approaching a complete repository of sequence-verified protein-encoding clones for Saccharomyces cerevisiae.</title>
        <authorList>
            <person name="Hu Y."/>
            <person name="Rolfs A."/>
            <person name="Bhullar B."/>
            <person name="Murthy T.V.S."/>
            <person name="Zhu C."/>
            <person name="Berger M.F."/>
            <person name="Camargo A.A."/>
            <person name="Kelley F."/>
            <person name="McCarron S."/>
            <person name="Jepson D."/>
            <person name="Richardson A."/>
            <person name="Raphael J."/>
            <person name="Moreira D."/>
            <person name="Taycher E."/>
            <person name="Zuo D."/>
            <person name="Mohr S."/>
            <person name="Kane M.F."/>
            <person name="Williamson J."/>
            <person name="Simpson A.J.G."/>
            <person name="Bulyk M.L."/>
            <person name="Harlow E."/>
            <person name="Marsischky G."/>
            <person name="Kolodner R.D."/>
            <person name="LaBaer J."/>
        </authorList>
    </citation>
    <scope>NUCLEOTIDE SEQUENCE [GENOMIC DNA]</scope>
    <source>
        <strain>ATCC 204508 / S288c</strain>
    </source>
</reference>
<reference key="5">
    <citation type="journal article" date="2003" name="Nature">
        <title>Global analysis of protein localization in budding yeast.</title>
        <authorList>
            <person name="Huh W.-K."/>
            <person name="Falvo J.V."/>
            <person name="Gerke L.C."/>
            <person name="Carroll A.S."/>
            <person name="Howson R.W."/>
            <person name="Weissman J.S."/>
            <person name="O'Shea E.K."/>
        </authorList>
    </citation>
    <scope>SUBCELLULAR LOCATION [LARGE SCALE ANALYSIS]</scope>
</reference>
<reference key="6">
    <citation type="journal article" date="2003" name="Nature">
        <title>Global analysis of protein expression in yeast.</title>
        <authorList>
            <person name="Ghaemmaghami S."/>
            <person name="Huh W.-K."/>
            <person name="Bower K."/>
            <person name="Howson R.W."/>
            <person name="Belle A."/>
            <person name="Dephoure N."/>
            <person name="O'Shea E.K."/>
            <person name="Weissman J.S."/>
        </authorList>
    </citation>
    <scope>LEVEL OF PROTEIN EXPRESSION [LARGE SCALE ANALYSIS]</scope>
</reference>
<reference key="7">
    <citation type="journal article" date="2005" name="Mol. Cell. Proteomics">
        <title>A novel, evolutionarily conserved protein phosphatase complex involved in cisplatin sensitivity.</title>
        <authorList>
            <person name="Gingras A.-C."/>
            <person name="Caballero M."/>
            <person name="Zarske M."/>
            <person name="Sanchez A."/>
            <person name="Hazbun T.R."/>
            <person name="Fields S."/>
            <person name="Sonenberg N."/>
            <person name="Hafen E."/>
            <person name="Raught B."/>
            <person name="Aebersold R."/>
        </authorList>
    </citation>
    <scope>IDENTIFICATION IN HTP-C COMPLEX</scope>
    <scope>IDENTIFICATION BY MASS SPECTROMETRY</scope>
    <scope>INTERACTION WITH SPT4 AND SPT5</scope>
</reference>
<reference key="8">
    <citation type="journal article" date="2006" name="Nature">
        <title>A phosphatase complex that dephosphorylates gamma-H2AX regulates DNA damage checkpoint recovery.</title>
        <authorList>
            <person name="Keogh M.-C."/>
            <person name="Kim J.-A."/>
            <person name="Downey M."/>
            <person name="Fillingham J."/>
            <person name="Chowdhury D."/>
            <person name="Harrison J.C."/>
            <person name="Onishi M."/>
            <person name="Datta N."/>
            <person name="Galicia S."/>
            <person name="Emili A."/>
            <person name="Lieberman J."/>
            <person name="Shen X."/>
            <person name="Buratowski S."/>
            <person name="Haber J.E."/>
            <person name="Durocher D."/>
            <person name="Greenblatt J.F."/>
            <person name="Krogan N.J."/>
        </authorList>
    </citation>
    <scope>FUNCTION</scope>
    <scope>IDENTIFICATION IN HTP-C COMPLEX</scope>
    <scope>IDENTIFICATION BY MASS SPECTROMETRY</scope>
</reference>
<reference key="9">
    <citation type="journal article" date="2008" name="Mol. Cell. Proteomics">
        <title>A multidimensional chromatography technology for in-depth phosphoproteome analysis.</title>
        <authorList>
            <person name="Albuquerque C.P."/>
            <person name="Smolka M.B."/>
            <person name="Payne S.H."/>
            <person name="Bafna V."/>
            <person name="Eng J."/>
            <person name="Zhou H."/>
        </authorList>
    </citation>
    <scope>IDENTIFICATION BY MASS SPECTROMETRY [LARGE SCALE ANALYSIS]</scope>
</reference>
<reference key="10">
    <citation type="journal article" date="2009" name="Science">
        <title>Global analysis of Cdk1 substrate phosphorylation sites provides insights into evolution.</title>
        <authorList>
            <person name="Holt L.J."/>
            <person name="Tuch B.B."/>
            <person name="Villen J."/>
            <person name="Johnson A.D."/>
            <person name="Gygi S.P."/>
            <person name="Morgan D.O."/>
        </authorList>
    </citation>
    <scope>PHOSPHORYLATION [LARGE SCALE ANALYSIS] AT THR-347</scope>
    <scope>IDENTIFICATION BY MASS SPECTROMETRY [LARGE SCALE ANALYSIS]</scope>
</reference>
<gene>
    <name type="primary">PSY4</name>
    <name type="synonym">HTP3</name>
    <name type="ordered locus">YBL046W</name>
    <name type="ORF">YBL0402</name>
</gene>
<proteinExistence type="evidence at protein level"/>